<sequence length="394" mass="44612">MYYQNQHQGKNILSSSRMHITSERHPFLRGNSPGDSGLILSTDAKPRLKWTPDLHERFIEAVNQLGGADKATPKTIMKVMGIPGLTLYHLKSHLQKYRLSKNLNGQANNSFNKIGIMTMMEEKTPDADEIQSENLSIGPQPNKNSPIGEALQMQIEVQRRLHEQLEVQRHLQLRIEAQGKYLQSVLEKAQETLGRQNLGAAGIEAAKVQLSELVSKVSAEYPNSSFLEPKELQNLCSQQMQTNYPPDCSLESCLTSSEGTQKNSKMLENNRLGLRTYIGDSTSEQKEIMEEPLFQRMELTWTEGLRGNPYLSTMVSEAEQRISYSERSPGRLSIGVGLHGHKSQHQQGNNEDHKLETRNRKGMDSTTELDLNTHVENYCTTRTKQFDLNGFSWN</sequence>
<organism>
    <name type="scientific">Arabidopsis thaliana</name>
    <name type="common">Mouse-ear cress</name>
    <dbReference type="NCBI Taxonomy" id="3702"/>
    <lineage>
        <taxon>Eukaryota</taxon>
        <taxon>Viridiplantae</taxon>
        <taxon>Streptophyta</taxon>
        <taxon>Embryophyta</taxon>
        <taxon>Tracheophyta</taxon>
        <taxon>Spermatophyta</taxon>
        <taxon>Magnoliopsida</taxon>
        <taxon>eudicotyledons</taxon>
        <taxon>Gunneridae</taxon>
        <taxon>Pentapetalae</taxon>
        <taxon>rosids</taxon>
        <taxon>malvids</taxon>
        <taxon>Brassicales</taxon>
        <taxon>Brassicaceae</taxon>
        <taxon>Camelineae</taxon>
        <taxon>Arabidopsis</taxon>
    </lineage>
</organism>
<accession>Q9SQQ9</accession>
<accession>B3H651</accession>
<accession>E3VS07</accession>
<accession>Q8VXV5</accession>
<reference key="1">
    <citation type="journal article" date="2011" name="Plant J.">
        <title>The Arabidopsis Myb genes MYR1 and MYR2 are redundant negative regulators of flowering time under decreased light intensity.</title>
        <authorList>
            <person name="Zhao C."/>
            <person name="Hanada A."/>
            <person name="Yamaguchi S."/>
            <person name="Kamiya Y."/>
            <person name="Beers E.P."/>
        </authorList>
    </citation>
    <scope>NUCLEOTIDE SEQUENCE [MRNA] (ISOFORM 4)</scope>
    <scope>FUNCTION</scope>
    <scope>DISRUPTION PHENOTYPE</scope>
</reference>
<reference key="2">
    <citation type="journal article" date="2000" name="Nature">
        <title>Sequence and analysis of chromosome 3 of the plant Arabidopsis thaliana.</title>
        <authorList>
            <person name="Salanoubat M."/>
            <person name="Lemcke K."/>
            <person name="Rieger M."/>
            <person name="Ansorge W."/>
            <person name="Unseld M."/>
            <person name="Fartmann B."/>
            <person name="Valle G."/>
            <person name="Bloecker H."/>
            <person name="Perez-Alonso M."/>
            <person name="Obermaier B."/>
            <person name="Delseny M."/>
            <person name="Boutry M."/>
            <person name="Grivell L.A."/>
            <person name="Mache R."/>
            <person name="Puigdomenech P."/>
            <person name="De Simone V."/>
            <person name="Choisne N."/>
            <person name="Artiguenave F."/>
            <person name="Robert C."/>
            <person name="Brottier P."/>
            <person name="Wincker P."/>
            <person name="Cattolico L."/>
            <person name="Weissenbach J."/>
            <person name="Saurin W."/>
            <person name="Quetier F."/>
            <person name="Schaefer M."/>
            <person name="Mueller-Auer S."/>
            <person name="Gabel C."/>
            <person name="Fuchs M."/>
            <person name="Benes V."/>
            <person name="Wurmbach E."/>
            <person name="Drzonek H."/>
            <person name="Erfle H."/>
            <person name="Jordan N."/>
            <person name="Bangert S."/>
            <person name="Wiedelmann R."/>
            <person name="Kranz H."/>
            <person name="Voss H."/>
            <person name="Holland R."/>
            <person name="Brandt P."/>
            <person name="Nyakatura G."/>
            <person name="Vezzi A."/>
            <person name="D'Angelo M."/>
            <person name="Pallavicini A."/>
            <person name="Toppo S."/>
            <person name="Simionati B."/>
            <person name="Conrad A."/>
            <person name="Hornischer K."/>
            <person name="Kauer G."/>
            <person name="Loehnert T.-H."/>
            <person name="Nordsiek G."/>
            <person name="Reichelt J."/>
            <person name="Scharfe M."/>
            <person name="Schoen O."/>
            <person name="Bargues M."/>
            <person name="Terol J."/>
            <person name="Climent J."/>
            <person name="Navarro P."/>
            <person name="Collado C."/>
            <person name="Perez-Perez A."/>
            <person name="Ottenwaelder B."/>
            <person name="Duchemin D."/>
            <person name="Cooke R."/>
            <person name="Laudie M."/>
            <person name="Berger-Llauro C."/>
            <person name="Purnelle B."/>
            <person name="Masuy D."/>
            <person name="de Haan M."/>
            <person name="Maarse A.C."/>
            <person name="Alcaraz J.-P."/>
            <person name="Cottet A."/>
            <person name="Casacuberta E."/>
            <person name="Monfort A."/>
            <person name="Argiriou A."/>
            <person name="Flores M."/>
            <person name="Liguori R."/>
            <person name="Vitale D."/>
            <person name="Mannhaupt G."/>
            <person name="Haase D."/>
            <person name="Schoof H."/>
            <person name="Rudd S."/>
            <person name="Zaccaria P."/>
            <person name="Mewes H.-W."/>
            <person name="Mayer K.F.X."/>
            <person name="Kaul S."/>
            <person name="Town C.D."/>
            <person name="Koo H.L."/>
            <person name="Tallon L.J."/>
            <person name="Jenkins J."/>
            <person name="Rooney T."/>
            <person name="Rizzo M."/>
            <person name="Walts A."/>
            <person name="Utterback T."/>
            <person name="Fujii C.Y."/>
            <person name="Shea T.P."/>
            <person name="Creasy T.H."/>
            <person name="Haas B."/>
            <person name="Maiti R."/>
            <person name="Wu D."/>
            <person name="Peterson J."/>
            <person name="Van Aken S."/>
            <person name="Pai G."/>
            <person name="Militscher J."/>
            <person name="Sellers P."/>
            <person name="Gill J.E."/>
            <person name="Feldblyum T.V."/>
            <person name="Preuss D."/>
            <person name="Lin X."/>
            <person name="Nierman W.C."/>
            <person name="Salzberg S.L."/>
            <person name="White O."/>
            <person name="Venter J.C."/>
            <person name="Fraser C.M."/>
            <person name="Kaneko T."/>
            <person name="Nakamura Y."/>
            <person name="Sato S."/>
            <person name="Kato T."/>
            <person name="Asamizu E."/>
            <person name="Sasamoto S."/>
            <person name="Kimura T."/>
            <person name="Idesawa K."/>
            <person name="Kawashima K."/>
            <person name="Kishida Y."/>
            <person name="Kiyokawa C."/>
            <person name="Kohara M."/>
            <person name="Matsumoto M."/>
            <person name="Matsuno A."/>
            <person name="Muraki A."/>
            <person name="Nakayama S."/>
            <person name="Nakazaki N."/>
            <person name="Shinpo S."/>
            <person name="Takeuchi C."/>
            <person name="Wada T."/>
            <person name="Watanabe A."/>
            <person name="Yamada M."/>
            <person name="Yasuda M."/>
            <person name="Tabata S."/>
        </authorList>
    </citation>
    <scope>NUCLEOTIDE SEQUENCE [LARGE SCALE GENOMIC DNA]</scope>
    <source>
        <strain>cv. Columbia</strain>
    </source>
</reference>
<reference key="3">
    <citation type="journal article" date="2017" name="Plant J.">
        <title>Araport11: a complete reannotation of the Arabidopsis thaliana reference genome.</title>
        <authorList>
            <person name="Cheng C.Y."/>
            <person name="Krishnakumar V."/>
            <person name="Chan A.P."/>
            <person name="Thibaud-Nissen F."/>
            <person name="Schobel S."/>
            <person name="Town C.D."/>
        </authorList>
    </citation>
    <scope>GENOME REANNOTATION</scope>
    <source>
        <strain>cv. Columbia</strain>
    </source>
</reference>
<reference key="4">
    <citation type="journal article" date="2003" name="Science">
        <title>Empirical analysis of transcriptional activity in the Arabidopsis genome.</title>
        <authorList>
            <person name="Yamada K."/>
            <person name="Lim J."/>
            <person name="Dale J.M."/>
            <person name="Chen H."/>
            <person name="Shinn P."/>
            <person name="Palm C.J."/>
            <person name="Southwick A.M."/>
            <person name="Wu H.C."/>
            <person name="Kim C.J."/>
            <person name="Nguyen M."/>
            <person name="Pham P.K."/>
            <person name="Cheuk R.F."/>
            <person name="Karlin-Newmann G."/>
            <person name="Liu S.X."/>
            <person name="Lam B."/>
            <person name="Sakano H."/>
            <person name="Wu T."/>
            <person name="Yu G."/>
            <person name="Miranda M."/>
            <person name="Quach H.L."/>
            <person name="Tripp M."/>
            <person name="Chang C.H."/>
            <person name="Lee J.M."/>
            <person name="Toriumi M.J."/>
            <person name="Chan M.M."/>
            <person name="Tang C.C."/>
            <person name="Onodera C.S."/>
            <person name="Deng J.M."/>
            <person name="Akiyama K."/>
            <person name="Ansari Y."/>
            <person name="Arakawa T."/>
            <person name="Banh J."/>
            <person name="Banno F."/>
            <person name="Bowser L."/>
            <person name="Brooks S.Y."/>
            <person name="Carninci P."/>
            <person name="Chao Q."/>
            <person name="Choy N."/>
            <person name="Enju A."/>
            <person name="Goldsmith A.D."/>
            <person name="Gurjal M."/>
            <person name="Hansen N.F."/>
            <person name="Hayashizaki Y."/>
            <person name="Johnson-Hopson C."/>
            <person name="Hsuan V.W."/>
            <person name="Iida K."/>
            <person name="Karnes M."/>
            <person name="Khan S."/>
            <person name="Koesema E."/>
            <person name="Ishida J."/>
            <person name="Jiang P.X."/>
            <person name="Jones T."/>
            <person name="Kawai J."/>
            <person name="Kamiya A."/>
            <person name="Meyers C."/>
            <person name="Nakajima M."/>
            <person name="Narusaka M."/>
            <person name="Seki M."/>
            <person name="Sakurai T."/>
            <person name="Satou M."/>
            <person name="Tamse R."/>
            <person name="Vaysberg M."/>
            <person name="Wallender E.K."/>
            <person name="Wong C."/>
            <person name="Yamamura Y."/>
            <person name="Yuan S."/>
            <person name="Shinozaki K."/>
            <person name="Davis R.W."/>
            <person name="Theologis A."/>
            <person name="Ecker J.R."/>
        </authorList>
    </citation>
    <scope>NUCLEOTIDE SEQUENCE [LARGE SCALE MRNA] (ISOFORM 2)</scope>
    <source>
        <strain>cv. Columbia</strain>
    </source>
</reference>
<reference key="5">
    <citation type="journal article" date="2001" name="Genes Dev.">
        <title>A conserved MYB transcription factor involved in phosphate starvation signaling both in vascular plants and in unicellular algae.</title>
        <authorList>
            <person name="Rubio V."/>
            <person name="Linhares F."/>
            <person name="Solano R."/>
            <person name="Martin A.C."/>
            <person name="Iglesias J."/>
            <person name="Leyva A."/>
            <person name="Paz-Ares J."/>
        </authorList>
    </citation>
    <scope>GENE FAMILY</scope>
</reference>
<reference key="6">
    <citation type="journal article" date="2004" name="Planta">
        <title>Transcripts of MYB-like genes respond to phosphorous and nitrogen deprivation in Arabidopsis.</title>
        <authorList>
            <person name="Todd C.D."/>
            <person name="Zeng P."/>
            <person name="Huete A.M."/>
            <person name="Hoyos M.E."/>
            <person name="Polacco J.C."/>
        </authorList>
    </citation>
    <scope>INDUCTION BY NITROGEN</scope>
    <scope>FUNCTION</scope>
</reference>
<reference key="7">
    <citation type="journal article" date="2005" name="Plant Physiol.">
        <title>The xylem and phloem transcriptomes from secondary tissues of the Arabidopsis root-hypocotyl.</title>
        <authorList>
            <person name="Zhao C."/>
            <person name="Craig J.C."/>
            <person name="Petzold H.E."/>
            <person name="Dickerman A.W."/>
            <person name="Beers E.P."/>
        </authorList>
    </citation>
    <scope>TISSUE SPECIFICITY</scope>
</reference>
<reference key="8">
    <citation type="journal article" date="2013" name="Plant Signal. Behav.">
        <title>Alternative splicing of Myb-related genes MYR1 and MYR2 may modulate activities through changes in dimerization, localization, or protein folding.</title>
        <authorList>
            <person name="Zhao C."/>
            <person name="Beers E."/>
        </authorList>
    </citation>
    <scope>ALTERNATIVE SPLICING</scope>
    <scope>SUBUNIT (ISOFORMS 1 AND 3)</scope>
    <scope>SUBCELLULAR LOCATION (ISOFORMS 1 AND 3)</scope>
    <scope>MUTAGENESIS OF LYS-70; THR-72; LYS-74 AND LYS-78</scope>
</reference>
<dbReference type="EMBL" id="HQ222089">
    <property type="protein sequence ID" value="ADO32622.1"/>
    <property type="molecule type" value="mRNA"/>
</dbReference>
<dbReference type="EMBL" id="AC011698">
    <property type="protein sequence ID" value="AAF05867.1"/>
    <property type="molecule type" value="Genomic_DNA"/>
</dbReference>
<dbReference type="EMBL" id="CP002686">
    <property type="protein sequence ID" value="AEE74027.1"/>
    <property type="molecule type" value="Genomic_DNA"/>
</dbReference>
<dbReference type="EMBL" id="CP002686">
    <property type="protein sequence ID" value="AEE74028.1"/>
    <property type="molecule type" value="Genomic_DNA"/>
</dbReference>
<dbReference type="EMBL" id="CP002686">
    <property type="protein sequence ID" value="AEE74029.1"/>
    <property type="molecule type" value="Genomic_DNA"/>
</dbReference>
<dbReference type="EMBL" id="AY074563">
    <property type="protein sequence ID" value="AAL67103.1"/>
    <property type="molecule type" value="mRNA"/>
</dbReference>
<dbReference type="EMBL" id="AY143915">
    <property type="protein sequence ID" value="AAN28854.1"/>
    <property type="molecule type" value="mRNA"/>
</dbReference>
<dbReference type="RefSeq" id="NP_001118567.1">
    <molecule id="Q9SQQ9-1"/>
    <property type="nucleotide sequence ID" value="NM_001125095.2"/>
</dbReference>
<dbReference type="RefSeq" id="NP_187053.2">
    <molecule id="Q9SQQ9-2"/>
    <property type="nucleotide sequence ID" value="NM_111274.4"/>
</dbReference>
<dbReference type="RefSeq" id="NP_974216.1">
    <molecule id="Q9SQQ9-3"/>
    <property type="nucleotide sequence ID" value="NM_202487.1"/>
</dbReference>
<dbReference type="SMR" id="Q9SQQ9"/>
<dbReference type="FunCoup" id="Q9SQQ9">
    <property type="interactions" value="64"/>
</dbReference>
<dbReference type="IntAct" id="Q9SQQ9">
    <property type="interactions" value="2"/>
</dbReference>
<dbReference type="STRING" id="3702.Q9SQQ9"/>
<dbReference type="PaxDb" id="3702-AT3G04030.3"/>
<dbReference type="ProteomicsDB" id="236749">
    <molecule id="Q9SQQ9-1"/>
</dbReference>
<dbReference type="EnsemblPlants" id="AT3G04030.1">
    <molecule id="Q9SQQ9-2"/>
    <property type="protein sequence ID" value="AT3G04030.1"/>
    <property type="gene ID" value="AT3G04030"/>
</dbReference>
<dbReference type="EnsemblPlants" id="AT3G04030.2">
    <molecule id="Q9SQQ9-3"/>
    <property type="protein sequence ID" value="AT3G04030.2"/>
    <property type="gene ID" value="AT3G04030"/>
</dbReference>
<dbReference type="EnsemblPlants" id="AT3G04030.3">
    <molecule id="Q9SQQ9-1"/>
    <property type="protein sequence ID" value="AT3G04030.3"/>
    <property type="gene ID" value="AT3G04030"/>
</dbReference>
<dbReference type="GeneID" id="819558"/>
<dbReference type="Gramene" id="AT3G04030.1">
    <molecule id="Q9SQQ9-2"/>
    <property type="protein sequence ID" value="AT3G04030.1"/>
    <property type="gene ID" value="AT3G04030"/>
</dbReference>
<dbReference type="Gramene" id="AT3G04030.2">
    <molecule id="Q9SQQ9-3"/>
    <property type="protein sequence ID" value="AT3G04030.2"/>
    <property type="gene ID" value="AT3G04030"/>
</dbReference>
<dbReference type="Gramene" id="AT3G04030.3">
    <molecule id="Q9SQQ9-1"/>
    <property type="protein sequence ID" value="AT3G04030.3"/>
    <property type="gene ID" value="AT3G04030"/>
</dbReference>
<dbReference type="KEGG" id="ath:AT3G04030"/>
<dbReference type="Araport" id="AT3G04030"/>
<dbReference type="TAIR" id="AT3G04030">
    <property type="gene designation" value="MYR2"/>
</dbReference>
<dbReference type="eggNOG" id="ENOG502QT7M">
    <property type="taxonomic scope" value="Eukaryota"/>
</dbReference>
<dbReference type="HOGENOM" id="CLU_053944_3_0_1"/>
<dbReference type="InParanoid" id="Q9SQQ9"/>
<dbReference type="OMA" id="DLKWCDP"/>
<dbReference type="PhylomeDB" id="Q9SQQ9"/>
<dbReference type="BioCyc" id="ARA:AT1G11680-MONOMER"/>
<dbReference type="PRO" id="PR:Q9SQQ9"/>
<dbReference type="Proteomes" id="UP000006548">
    <property type="component" value="Chromosome 3"/>
</dbReference>
<dbReference type="ExpressionAtlas" id="Q9SQQ9">
    <property type="expression patterns" value="baseline and differential"/>
</dbReference>
<dbReference type="GO" id="GO:0005634">
    <property type="term" value="C:nucleus"/>
    <property type="evidence" value="ECO:0007669"/>
    <property type="project" value="UniProtKB-SubCell"/>
</dbReference>
<dbReference type="GO" id="GO:0003677">
    <property type="term" value="F:DNA binding"/>
    <property type="evidence" value="ECO:0007669"/>
    <property type="project" value="UniProtKB-KW"/>
</dbReference>
<dbReference type="GO" id="GO:0003700">
    <property type="term" value="F:DNA-binding transcription factor activity"/>
    <property type="evidence" value="ECO:0000250"/>
    <property type="project" value="TAIR"/>
</dbReference>
<dbReference type="FunFam" id="1.10.10.60:FF:000002">
    <property type="entry name" value="Myb family transcription factor"/>
    <property type="match status" value="1"/>
</dbReference>
<dbReference type="Gene3D" id="1.10.10.60">
    <property type="entry name" value="Homeodomain-like"/>
    <property type="match status" value="1"/>
</dbReference>
<dbReference type="InterPro" id="IPR009057">
    <property type="entry name" value="Homeodomain-like_sf"/>
</dbReference>
<dbReference type="InterPro" id="IPR025756">
    <property type="entry name" value="Myb_CC_LHEQLE"/>
</dbReference>
<dbReference type="InterPro" id="IPR017930">
    <property type="entry name" value="Myb_dom"/>
</dbReference>
<dbReference type="InterPro" id="IPR006447">
    <property type="entry name" value="Myb_dom_plants"/>
</dbReference>
<dbReference type="InterPro" id="IPR046955">
    <property type="entry name" value="PHR1-like"/>
</dbReference>
<dbReference type="InterPro" id="IPR001005">
    <property type="entry name" value="SANT/Myb"/>
</dbReference>
<dbReference type="NCBIfam" id="TIGR01557">
    <property type="entry name" value="myb_SHAQKYF"/>
    <property type="match status" value="1"/>
</dbReference>
<dbReference type="PANTHER" id="PTHR31499">
    <property type="entry name" value="MYB FAMILY TRANSCRIPTION FACTOR PHL11"/>
    <property type="match status" value="1"/>
</dbReference>
<dbReference type="PANTHER" id="PTHR31499:SF2">
    <property type="entry name" value="MYB-RELATED PROTEIN 2"/>
    <property type="match status" value="1"/>
</dbReference>
<dbReference type="Pfam" id="PF14379">
    <property type="entry name" value="Myb_CC_LHEQLE"/>
    <property type="match status" value="1"/>
</dbReference>
<dbReference type="Pfam" id="PF00249">
    <property type="entry name" value="Myb_DNA-binding"/>
    <property type="match status" value="1"/>
</dbReference>
<dbReference type="SUPFAM" id="SSF46689">
    <property type="entry name" value="Homeodomain-like"/>
    <property type="match status" value="1"/>
</dbReference>
<dbReference type="PROSITE" id="PS51294">
    <property type="entry name" value="HTH_MYB"/>
    <property type="match status" value="1"/>
</dbReference>
<name>PHL9_ARATH</name>
<keyword id="KW-0025">Alternative splicing</keyword>
<keyword id="KW-0175">Coiled coil</keyword>
<keyword id="KW-0238">DNA-binding</keyword>
<keyword id="KW-0539">Nucleus</keyword>
<keyword id="KW-1185">Reference proteome</keyword>
<keyword id="KW-0804">Transcription</keyword>
<keyword id="KW-0805">Transcription regulation</keyword>
<comment type="function">
    <text evidence="5 10">Transcriptional activator that may activate the transcription of specific genes involved in nitrogen uptake or assimilation (PubMed:15592750). Acts redundantly with MYR1 as a repressor of flowering and organ elongation under decreased light intensity (PubMed:21255164). Represses gibberellic acid (GA)-dependent responses and affects levels of bioactive GA (PubMed:21255164).</text>
</comment>
<comment type="subunit">
    <text evidence="6">Isoform 1: Homodimer. Isoform 3: Does not form homodimer.</text>
</comment>
<comment type="subcellular location">
    <molecule>Isoform 1</molecule>
    <subcellularLocation>
        <location evidence="6">Nucleus</location>
    </subcellularLocation>
</comment>
<comment type="subcellular location">
    <molecule>Isoform 3</molecule>
    <subcellularLocation>
        <location evidence="6">Nucleus</location>
    </subcellularLocation>
    <text evidence="11">In 21% of the cells, localized to one or more spots within the nucleus due to protein aggregation.</text>
</comment>
<comment type="alternative products">
    <event type="alternative splicing"/>
    <isoform>
        <id>Q9SQQ9-1</id>
        <name>1</name>
        <sequence type="displayed"/>
    </isoform>
    <isoform>
        <id>Q9SQQ9-2</id>
        <name>2</name>
        <sequence type="described" ref="VSP_058436"/>
    </isoform>
    <isoform>
        <id>Q9SQQ9-3</id>
        <name>3</name>
        <sequence type="described" ref="VSP_058435"/>
    </isoform>
    <isoform>
        <id>Q9SQQ9-4</id>
        <name>4</name>
        <sequence type="described" ref="VSP_058437"/>
    </isoform>
</comment>
<comment type="tissue specificity">
    <text evidence="4">Expressed in phloem and/or cambium.</text>
</comment>
<comment type="induction">
    <text evidence="3">Up-regulated by nitrogen deficiency.</text>
</comment>
<comment type="disruption phenotype">
    <text evidence="5">No visible phenotype when grown under long days conditions, but early flowering when grown under short days conditions.</text>
</comment>
<comment type="similarity">
    <text evidence="9">Belongs to the MYB-CC family.</text>
</comment>
<gene>
    <name evidence="8" type="primary">MYR2</name>
    <name evidence="7" type="synonym">NSR1</name>
    <name evidence="9" type="synonym">PHL9</name>
    <name evidence="12" type="ordered locus">At3g04030</name>
    <name evidence="13" type="ORF">T11I18.14</name>
</gene>
<protein>
    <recommendedName>
        <fullName evidence="8">Myb-related protein 2</fullName>
    </recommendedName>
    <alternativeName>
        <fullName evidence="9">Myb family transcription factor PHL9</fullName>
    </alternativeName>
    <alternativeName>
        <fullName evidence="7">Protein NITROGEN STARVATION RESPONSE 1</fullName>
        <shortName evidence="7">AtNSR1</shortName>
    </alternativeName>
    <alternativeName>
        <fullName evidence="9">Protein PHR1-LIKE 9</fullName>
    </alternativeName>
</protein>
<feature type="chain" id="PRO_0000436866" description="Myb-related protein 2">
    <location>
        <begin position="1"/>
        <end position="394"/>
    </location>
</feature>
<feature type="domain" description="HTH myb-type" evidence="1">
    <location>
        <begin position="42"/>
        <end position="102"/>
    </location>
</feature>
<feature type="DNA-binding region" description="H-T-H motif" evidence="1">
    <location>
        <begin position="73"/>
        <end position="98"/>
    </location>
</feature>
<feature type="region of interest" description="Coiled coil" evidence="9">
    <location>
        <begin position="148"/>
        <end position="168"/>
    </location>
</feature>
<feature type="region of interest" description="Disordered" evidence="2">
    <location>
        <begin position="338"/>
        <end position="363"/>
    </location>
</feature>
<feature type="short sequence motif" description="LHEQLE" evidence="9">
    <location>
        <begin position="161"/>
        <end position="166"/>
    </location>
</feature>
<feature type="compositionally biased region" description="Basic and acidic residues" evidence="2">
    <location>
        <begin position="350"/>
        <end position="363"/>
    </location>
</feature>
<feature type="splice variant" id="VSP_058435" description="In isoform 3.">
    <original>KA</original>
    <variation>T</variation>
    <location>
        <begin position="70"/>
        <end position="71"/>
    </location>
</feature>
<feature type="splice variant" id="VSP_058436" description="In isoform 2.">
    <location>
        <begin position="167"/>
        <end position="172"/>
    </location>
</feature>
<feature type="splice variant" id="VSP_058437" description="In isoform 4.">
    <location>
        <begin position="167"/>
        <end position="168"/>
    </location>
</feature>
<feature type="mutagenesis site" description="Partly directed to one or more nuclear spots. Partly located to extra-nuclear aggregates; when associated with A-74 or A-78. Complete loss of nuclear localization; when associated with A-74 and A-78." evidence="6">
    <original>K</original>
    <variation>A</variation>
    <location>
        <position position="70"/>
    </location>
</feature>
<feature type="mutagenesis site" description="No effect on nuclear localization. No effect nuclear localization; when associated with R-74 and R-78." evidence="6">
    <original>K</original>
    <variation>R</variation>
    <location>
        <position position="70"/>
    </location>
</feature>
<feature type="mutagenesis site" description="In isoform 1 and isoform 3; no effect on nuclear localization." evidence="6">
    <original>T</original>
    <variation>A</variation>
    <location>
        <position position="72"/>
    </location>
</feature>
<feature type="mutagenesis site" description="In isoform 1; partial localization to one or more nuclear spots. In isoform 3; increased localization to nuclear spots." evidence="6">
    <original>T</original>
    <variation>E</variation>
    <location>
        <position position="72"/>
    </location>
</feature>
<feature type="mutagenesis site" description="Partly directed to one or more nuclear spots. Partly located to extra-nuclear aggregates; when associated with A-70 or A-78. Complete loss of nuclear localization; when associated with A-74 and A-78." evidence="6">
    <original>K</original>
    <variation>A</variation>
    <location>
        <position position="74"/>
    </location>
</feature>
<feature type="mutagenesis site" description="No effect on nuclear localization. No effect nuclear localization; when associated with R-70 and R-78." evidence="6">
    <original>K</original>
    <variation>R</variation>
    <location>
        <position position="74"/>
    </location>
</feature>
<feature type="mutagenesis site" description="Partly located to extra-nuclear aggregates; when associated with A-70 or A-74. Complete loss of nuclear localization; when associated with A-70 and A-74." evidence="6">
    <original>K</original>
    <variation>A</variation>
    <location>
        <position position="78"/>
    </location>
</feature>
<feature type="mutagenesis site" description="No effect on nuclear localization. No effect nuclear localization; when associated with R-70 and R-74." evidence="6">
    <original>K</original>
    <variation>R</variation>
    <location>
        <position position="78"/>
    </location>
</feature>
<proteinExistence type="evidence at protein level"/>
<evidence type="ECO:0000255" key="1">
    <source>
        <dbReference type="PROSITE-ProRule" id="PRU00625"/>
    </source>
</evidence>
<evidence type="ECO:0000256" key="2">
    <source>
        <dbReference type="SAM" id="MobiDB-lite"/>
    </source>
</evidence>
<evidence type="ECO:0000269" key="3">
    <source>
    </source>
</evidence>
<evidence type="ECO:0000269" key="4">
    <source>
    </source>
</evidence>
<evidence type="ECO:0000269" key="5">
    <source>
    </source>
</evidence>
<evidence type="ECO:0000269" key="6">
    <source>
    </source>
</evidence>
<evidence type="ECO:0000303" key="7">
    <source>
    </source>
</evidence>
<evidence type="ECO:0000303" key="8">
    <source>
    </source>
</evidence>
<evidence type="ECO:0000305" key="9"/>
<evidence type="ECO:0000305" key="10">
    <source>
    </source>
</evidence>
<evidence type="ECO:0000305" key="11">
    <source>
    </source>
</evidence>
<evidence type="ECO:0000312" key="12">
    <source>
        <dbReference type="Araport" id="AT3G04030"/>
    </source>
</evidence>
<evidence type="ECO:0000312" key="13">
    <source>
        <dbReference type="EMBL" id="AAF05867.1"/>
    </source>
</evidence>